<keyword id="KW-0007">Acetylation</keyword>
<keyword id="KW-0963">Cytoplasm</keyword>
<keyword id="KW-0378">Hydrolase</keyword>
<keyword id="KW-0597">Phosphoprotein</keyword>
<keyword id="KW-1185">Reference proteome</keyword>
<sequence length="732" mass="81384">MERQVLLSEPQEAAALYRGLSRQPSLSAACLGPEVTTQYGGLYRTVHTEWTQRDLERMENIRFCRQYLVFHDGDSVVFAGPAGNSVETRGELLSRESPSGTMKAVLRKAGGTVSGEEKQFLEVWEKNRKLKSFNLSALEKHGPVYEDDCFGCLSWSHSETHLLYVAEKKRPKAESFFQTKALDISASDDEMARPKKPDQAIKGDQFVFYEDWGETMVSKSIPVLCVLDIDSGNISVLEGVPENVSPGQAFWAPGDTGVVFVGWWHEPFRLGIRYCTNRRSALYYVDLSGGKCELLSDGSLAICSPRLSPDQCRIVYLQYPCLAPHHQCSQLCLYDWYTKVTSVVVDIVPRQLGESFSGIYCSLLPLGCWSADSQRVVFDSAQRSRQDLFAVDTQTGSITSLTAAGSAGSWKLLTIDKDLMVAQFSTPSLPPSLKVGFLPPPGKEQSVSWVSLEEAEPIPGIHWGVRVLHPPPDQENVQYADLDFEAILLQPSNPPDKTQVPMVVMPHGGPHSSFVTAWMLFPAMLCKMGFAVLLVNYRGSTGFGQDSILSLPGNVGHQDVKDVQFAVEQVLQEEHFDARRVALMGGSHGGFLSCHLIGQYPETYSACIARNPVINIASMMGSTDIPDWCMVETGFPYSNSCLPDLNVWEEMLDKSPIKYIPQVKTPVLLMLGQEDRRVPFKQGMEYYRALKARNVPVRLLLYPKSNHALSEVEAESDSFMNAVLWLHTHLGS</sequence>
<gene>
    <name type="primary">Apeh</name>
</gene>
<proteinExistence type="evidence at protein level"/>
<comment type="function">
    <text evidence="1 6">This enzyme catalyzes the hydrolysis of the N-terminal peptide bond of an N-acetylated peptide to generate an N-acetylated amino acid and a peptide with a free N-terminus (PubMed:3305492). It preferentially cleaves off Ac-Ala, Ac-Met and Ac-Ser (PubMed:3305492). Also, involved in the degradation of oxidized and glycated proteins (By similarity).</text>
</comment>
<comment type="catalytic activity">
    <reaction evidence="6">
        <text>Cleavage of an N-acetyl or N-formyl amino acid from the N-terminus of a polypeptide.</text>
        <dbReference type="EC" id="3.4.19.1"/>
    </reaction>
</comment>
<comment type="activity regulation">
    <text evidence="2">Homotetramerization is required for activity. Tetramerization results in the formation of a gated channel which is involved in substrate selection and substrate access to the catalytic sites.</text>
</comment>
<comment type="subunit">
    <text evidence="3">Homotetramer.</text>
</comment>
<comment type="subcellular location">
    <subcellularLocation>
        <location evidence="1">Cytoplasm</location>
    </subcellularLocation>
</comment>
<comment type="similarity">
    <text evidence="7">Belongs to the peptidase S9C family.</text>
</comment>
<protein>
    <recommendedName>
        <fullName>Acylamino-acid-releasing enzyme</fullName>
        <shortName>AARE</shortName>
        <ecNumber evidence="6">3.4.19.1</ecNumber>
    </recommendedName>
    <alternativeName>
        <fullName>Acyl-peptide hydrolase</fullName>
        <shortName>APH</shortName>
    </alternativeName>
    <alternativeName>
        <fullName>Acylaminoacyl-peptidase</fullName>
    </alternativeName>
</protein>
<dbReference type="EC" id="3.4.19.1" evidence="6"/>
<dbReference type="EMBL" id="J04733">
    <property type="protein sequence ID" value="AAA88506.1"/>
    <property type="molecule type" value="mRNA"/>
</dbReference>
<dbReference type="EMBL" id="X14915">
    <property type="protein sequence ID" value="CAA33040.1"/>
    <property type="status" value="ALT_SEQ"/>
    <property type="molecule type" value="Genomic_DNA"/>
</dbReference>
<dbReference type="PIR" id="A33706">
    <property type="entry name" value="S07624"/>
</dbReference>
<dbReference type="RefSeq" id="NP_036632.1">
    <property type="nucleotide sequence ID" value="NM_012500.1"/>
</dbReference>
<dbReference type="SMR" id="P13676"/>
<dbReference type="FunCoup" id="P13676">
    <property type="interactions" value="2086"/>
</dbReference>
<dbReference type="STRING" id="10116.ENSRNOP00000043843"/>
<dbReference type="ESTHER" id="ratno-acph">
    <property type="family name" value="ACPH_Peptidase_S9"/>
</dbReference>
<dbReference type="iPTMnet" id="P13676"/>
<dbReference type="PhosphoSitePlus" id="P13676"/>
<dbReference type="jPOST" id="P13676"/>
<dbReference type="PaxDb" id="10116-ENSRNOP00000043843"/>
<dbReference type="GeneID" id="24206"/>
<dbReference type="KEGG" id="rno:24206"/>
<dbReference type="UCSC" id="RGD:2125">
    <property type="organism name" value="rat"/>
</dbReference>
<dbReference type="AGR" id="RGD:2125"/>
<dbReference type="CTD" id="327"/>
<dbReference type="RGD" id="2125">
    <property type="gene designation" value="Apeh"/>
</dbReference>
<dbReference type="eggNOG" id="KOG2100">
    <property type="taxonomic scope" value="Eukaryota"/>
</dbReference>
<dbReference type="InParanoid" id="P13676"/>
<dbReference type="OrthoDB" id="10097at9989"/>
<dbReference type="PhylomeDB" id="P13676"/>
<dbReference type="Reactome" id="R-RNO-6798695">
    <property type="pathway name" value="Neutrophil degranulation"/>
</dbReference>
<dbReference type="Reactome" id="R-RNO-72764">
    <property type="pathway name" value="Eukaryotic Translation Termination"/>
</dbReference>
<dbReference type="PRO" id="PR:P13676"/>
<dbReference type="Proteomes" id="UP000002494">
    <property type="component" value="Unplaced"/>
</dbReference>
<dbReference type="GO" id="GO:0005737">
    <property type="term" value="C:cytoplasm"/>
    <property type="evidence" value="ECO:0007669"/>
    <property type="project" value="UniProtKB-SubCell"/>
</dbReference>
<dbReference type="GO" id="GO:0042802">
    <property type="term" value="F:identical protein binding"/>
    <property type="evidence" value="ECO:0000266"/>
    <property type="project" value="RGD"/>
</dbReference>
<dbReference type="GO" id="GO:0008242">
    <property type="term" value="F:omega peptidase activity"/>
    <property type="evidence" value="ECO:0000266"/>
    <property type="project" value="RGD"/>
</dbReference>
<dbReference type="GO" id="GO:0004252">
    <property type="term" value="F:serine-type endopeptidase activity"/>
    <property type="evidence" value="ECO:0000266"/>
    <property type="project" value="RGD"/>
</dbReference>
<dbReference type="GO" id="GO:0050435">
    <property type="term" value="P:amyloid-beta metabolic process"/>
    <property type="evidence" value="ECO:0000266"/>
    <property type="project" value="RGD"/>
</dbReference>
<dbReference type="GO" id="GO:0006508">
    <property type="term" value="P:proteolysis"/>
    <property type="evidence" value="ECO:0000266"/>
    <property type="project" value="RGD"/>
</dbReference>
<dbReference type="FunFam" id="2.120.10.30:FF:000047">
    <property type="entry name" value="Acylamino-acid-releasing enzyme"/>
    <property type="match status" value="1"/>
</dbReference>
<dbReference type="FunFam" id="3.40.50.1820:FF:000043">
    <property type="entry name" value="acylamino-acid-releasing enzyme"/>
    <property type="match status" value="1"/>
</dbReference>
<dbReference type="Gene3D" id="3.40.50.1820">
    <property type="entry name" value="alpha/beta hydrolase"/>
    <property type="match status" value="1"/>
</dbReference>
<dbReference type="Gene3D" id="2.120.10.30">
    <property type="entry name" value="TolB, C-terminal domain"/>
    <property type="match status" value="1"/>
</dbReference>
<dbReference type="InterPro" id="IPR011042">
    <property type="entry name" value="6-blade_b-propeller_TolB-like"/>
</dbReference>
<dbReference type="InterPro" id="IPR045550">
    <property type="entry name" value="AARE_N"/>
</dbReference>
<dbReference type="InterPro" id="IPR029058">
    <property type="entry name" value="AB_hydrolase_fold"/>
</dbReference>
<dbReference type="InterPro" id="IPR002471">
    <property type="entry name" value="Pept_S9_AS"/>
</dbReference>
<dbReference type="InterPro" id="IPR001375">
    <property type="entry name" value="Peptidase_S9_cat"/>
</dbReference>
<dbReference type="PANTHER" id="PTHR42776:SF4">
    <property type="entry name" value="ACYLAMINO-ACID-RELEASING ENZYME"/>
    <property type="match status" value="1"/>
</dbReference>
<dbReference type="PANTHER" id="PTHR42776">
    <property type="entry name" value="SERINE PEPTIDASE S9 FAMILY MEMBER"/>
    <property type="match status" value="1"/>
</dbReference>
<dbReference type="Pfam" id="PF19283">
    <property type="entry name" value="APEH_N"/>
    <property type="match status" value="1"/>
</dbReference>
<dbReference type="Pfam" id="PF00326">
    <property type="entry name" value="Peptidase_S9"/>
    <property type="match status" value="1"/>
</dbReference>
<dbReference type="SUPFAM" id="SSF53474">
    <property type="entry name" value="alpha/beta-Hydrolases"/>
    <property type="match status" value="1"/>
</dbReference>
<dbReference type="SUPFAM" id="SSF50993">
    <property type="entry name" value="Peptidase/esterase 'gauge' domain"/>
    <property type="match status" value="1"/>
</dbReference>
<dbReference type="PROSITE" id="PS00708">
    <property type="entry name" value="PRO_ENDOPEP_SER"/>
    <property type="match status" value="1"/>
</dbReference>
<reference key="1">
    <citation type="journal article" date="1989" name="J. Biol. Chem.">
        <title>Cloning and sequence analysis of a rat liver cDNA encoding acyl-peptide hydrolase.</title>
        <authorList>
            <person name="Kobayashi K."/>
            <person name="Lin L.-W."/>
            <person name="Yeadon J.E."/>
            <person name="Klickstein L.B."/>
            <person name="Smith J.A."/>
        </authorList>
    </citation>
    <scope>NUCLEOTIDE SEQUENCE [MRNA]</scope>
    <source>
        <tissue>Liver</tissue>
    </source>
</reference>
<reference key="2">
    <citation type="journal article" date="1989" name="Nucleic Acids Res.">
        <title>Structural organization of the rat acyl-peptide hydrolase gene.</title>
        <authorList>
            <person name="Lin L.-W."/>
            <person name="Lee F.J.S."/>
            <person name="Smith J.A."/>
        </authorList>
    </citation>
    <scope>NUCLEOTIDE SEQUENCE [GENOMIC DNA]</scope>
    <source>
        <strain>Sprague-Dawley</strain>
    </source>
</reference>
<reference key="3">
    <citation type="journal article" date="1987" name="J. Biol. Chem.">
        <title>Acyl-peptide hydrolase from rat liver. Characterization of enzyme reaction.</title>
        <authorList>
            <person name="Kobayashi K."/>
            <person name="Smith J.A."/>
        </authorList>
    </citation>
    <scope>BLOCKAGE OF N-TERMINUS</scope>
    <scope>FUNCTION</scope>
    <scope>CATALYTIC ACTIVITY</scope>
</reference>
<reference key="4">
    <citation type="journal article" date="2012" name="Nat. Commun.">
        <title>Quantitative maps of protein phosphorylation sites across 14 different rat organs and tissues.</title>
        <authorList>
            <person name="Lundby A."/>
            <person name="Secher A."/>
            <person name="Lage K."/>
            <person name="Nordsborg N.B."/>
            <person name="Dmytriyev A."/>
            <person name="Lundby C."/>
            <person name="Olsen J.V."/>
        </authorList>
    </citation>
    <scope>PHOSPHORYLATION [LARGE SCALE ANALYSIS] AT SER-187</scope>
    <scope>IDENTIFICATION BY MASS SPECTROMETRY [LARGE SCALE ANALYSIS]</scope>
</reference>
<organism>
    <name type="scientific">Rattus norvegicus</name>
    <name type="common">Rat</name>
    <dbReference type="NCBI Taxonomy" id="10116"/>
    <lineage>
        <taxon>Eukaryota</taxon>
        <taxon>Metazoa</taxon>
        <taxon>Chordata</taxon>
        <taxon>Craniata</taxon>
        <taxon>Vertebrata</taxon>
        <taxon>Euteleostomi</taxon>
        <taxon>Mammalia</taxon>
        <taxon>Eutheria</taxon>
        <taxon>Euarchontoglires</taxon>
        <taxon>Glires</taxon>
        <taxon>Rodentia</taxon>
        <taxon>Myomorpha</taxon>
        <taxon>Muroidea</taxon>
        <taxon>Muridae</taxon>
        <taxon>Murinae</taxon>
        <taxon>Rattus</taxon>
    </lineage>
</organism>
<feature type="chain" id="PRO_0000122434" description="Acylamino-acid-releasing enzyme">
    <location>
        <begin position="1"/>
        <end position="732"/>
    </location>
</feature>
<feature type="active site" description="Charge relay system" evidence="4">
    <location>
        <position position="587"/>
    </location>
</feature>
<feature type="active site" description="Charge relay system" evidence="4">
    <location>
        <position position="675"/>
    </location>
</feature>
<feature type="active site" description="Charge relay system" evidence="4">
    <location>
        <position position="707"/>
    </location>
</feature>
<feature type="modified residue" description="Blocked amino end (Met); alternate" evidence="5">
    <location>
        <position position="1"/>
    </location>
</feature>
<feature type="modified residue" description="N-acetylmethionine; alternate" evidence="1">
    <location>
        <position position="1"/>
    </location>
</feature>
<feature type="modified residue" description="Phosphoserine" evidence="1">
    <location>
        <position position="185"/>
    </location>
</feature>
<feature type="modified residue" description="Phosphoserine" evidence="8">
    <location>
        <position position="187"/>
    </location>
</feature>
<feature type="sequence conflict" description="In Ref. 2; CAA33040." evidence="7" ref="2">
    <original>IPDW</original>
    <variation>M</variation>
    <location>
        <begin position="625"/>
        <end position="628"/>
    </location>
</feature>
<name>ACPH_RAT</name>
<accession>P13676</accession>
<accession>P14320</accession>
<accession>P70479</accession>
<evidence type="ECO:0000250" key="1">
    <source>
        <dbReference type="UniProtKB" id="P13798"/>
    </source>
</evidence>
<evidence type="ECO:0000250" key="2">
    <source>
        <dbReference type="UniProtKB" id="P19205"/>
    </source>
</evidence>
<evidence type="ECO:0000250" key="3">
    <source>
        <dbReference type="UniProtKB" id="P80227"/>
    </source>
</evidence>
<evidence type="ECO:0000255" key="4">
    <source>
        <dbReference type="PROSITE-ProRule" id="PRU10084"/>
    </source>
</evidence>
<evidence type="ECO:0000269" key="5">
    <source>
    </source>
</evidence>
<evidence type="ECO:0000269" key="6">
    <source>
    </source>
</evidence>
<evidence type="ECO:0000305" key="7"/>
<evidence type="ECO:0007744" key="8">
    <source>
    </source>
</evidence>